<keyword id="KW-0017">Alkaloid metabolism</keyword>
<keyword id="KW-0256">Endoplasmic reticulum</keyword>
<keyword id="KW-0325">Glycoprotein</keyword>
<keyword id="KW-0349">Heme</keyword>
<keyword id="KW-0408">Iron</keyword>
<keyword id="KW-0456">Lyase</keyword>
<keyword id="KW-0472">Membrane</keyword>
<keyword id="KW-0479">Metal-binding</keyword>
<keyword id="KW-0503">Monooxygenase</keyword>
<keyword id="KW-0560">Oxidoreductase</keyword>
<keyword id="KW-0812">Transmembrane</keyword>
<keyword id="KW-1133">Transmembrane helix</keyword>
<accession>F5BHA2</accession>
<sequence>MLSSLKDFFVLLLPFFIGIAFIYKLWNFTSKKNLPPSPRRLPIIGNLHQLSKFPQRSLRTLSEKYGPVMLLHFGSKPVLVISSAEAAKEVMKINDVSFADRPKWYAAGRVLYEFKDMTFSPYGEYWRQARSICVLQLLSNKRVQSFKGIREEEIRAMLEKINQASNNSSIINGDEIFSTLTNDIIGRSAFGRKFSEEESGSKLRKVLQDLPPLLGSFNVGDFIPWLSWVNYLNGFEKKLNQVSKDCDQYLEQVIDDTRKRDEENGANNNGGNHGNFVSVLLHLQKEDVKGFPSEKGFLKAIILDMIVGGTDTTHLLLHWVITELLKNKHVMTKLQKEVREIVGRKWEITDEDKEKMKYLHAVIKEALRLHPSLPLLVPRVAREDINLMGYRVAKGTEVIINAWAIARDPSYWDEAEEFKPERFLSNNFDFKGLNFEYIPFGSGRRSCPGSSFAIPIVEHTVAHLMHKFNIELPNGVSAEDFDPTDAVGLVSHDQNPLSFVATPVTIF</sequence>
<protein>
    <recommendedName>
        <fullName evidence="8">Tabersonine/lochnericine 19-hydroxylase</fullName>
        <ecNumber evidence="4 6">1.14.14.-</ecNumber>
    </recommendedName>
    <alternativeName>
        <fullName evidence="7 8">Cytochrome P450 71BJ1</fullName>
    </alternativeName>
</protein>
<comment type="function">
    <text evidence="4 6">Component of the monoterpenoid indole alkaloids (MIAs, e.g. echitovenine, tabersonine, lochnericine, 19-hydroxytabersonine and horhammericine) biosynthetic pathway; MIAs are used in cancer treatment and other medical applications (PubMed:31009114). Cytochrome P450 catalyzing the conversion of (-)-tabersonine to 19-hydroxytabersonine, of lochnericine to horhammericine and of (-)-vincadifformine to (-)-minovincinine (PubMed:21454651, PubMed:31009114).</text>
</comment>
<comment type="catalytic activity">
    <reaction evidence="4 6">
        <text>(-)-tabersonine + reduced [NADPH--hemoprotein reductase] + O2 = (-)-(R)-19-hydroxytabersonine + oxidized [NADPH--hemoprotein reductase] + H2O + H(+)</text>
        <dbReference type="Rhea" id="RHEA:61044"/>
        <dbReference type="Rhea" id="RHEA-COMP:11964"/>
        <dbReference type="Rhea" id="RHEA-COMP:11965"/>
        <dbReference type="ChEBI" id="CHEBI:15377"/>
        <dbReference type="ChEBI" id="CHEBI:15378"/>
        <dbReference type="ChEBI" id="CHEBI:15379"/>
        <dbReference type="ChEBI" id="CHEBI:57618"/>
        <dbReference type="ChEBI" id="CHEBI:57893"/>
        <dbReference type="ChEBI" id="CHEBI:58210"/>
        <dbReference type="ChEBI" id="CHEBI:144372"/>
    </reaction>
    <physiologicalReaction direction="left-to-right" evidence="4 6">
        <dbReference type="Rhea" id="RHEA:61045"/>
    </physiologicalReaction>
</comment>
<comment type="catalytic activity">
    <reaction evidence="4 6">
        <text>lochnericine + reduced [NADPH--hemoprotein reductase] + O2 = horhammericine + oxidized [NADPH--hemoprotein reductase] + H2O + H(+)</text>
        <dbReference type="Rhea" id="RHEA:61048"/>
        <dbReference type="Rhea" id="RHEA-COMP:11964"/>
        <dbReference type="Rhea" id="RHEA-COMP:11965"/>
        <dbReference type="ChEBI" id="CHEBI:15377"/>
        <dbReference type="ChEBI" id="CHEBI:15378"/>
        <dbReference type="ChEBI" id="CHEBI:15379"/>
        <dbReference type="ChEBI" id="CHEBI:57618"/>
        <dbReference type="ChEBI" id="CHEBI:58210"/>
        <dbReference type="ChEBI" id="CHEBI:144374"/>
        <dbReference type="ChEBI" id="CHEBI:144375"/>
    </reaction>
    <physiologicalReaction direction="left-to-right" evidence="4 6">
        <dbReference type="Rhea" id="RHEA:61049"/>
    </physiologicalReaction>
</comment>
<comment type="catalytic activity">
    <reaction evidence="6">
        <text>(-)-vincadifformine + reduced [NADPH--hemoprotein reductase] + O2 = (-)-minovincinine + oxidized [NADPH--hemoprotein reductase] + H2O + H(+)</text>
        <dbReference type="Rhea" id="RHEA:61052"/>
        <dbReference type="Rhea" id="RHEA-COMP:11964"/>
        <dbReference type="Rhea" id="RHEA-COMP:11965"/>
        <dbReference type="ChEBI" id="CHEBI:15377"/>
        <dbReference type="ChEBI" id="CHEBI:15378"/>
        <dbReference type="ChEBI" id="CHEBI:15379"/>
        <dbReference type="ChEBI" id="CHEBI:57618"/>
        <dbReference type="ChEBI" id="CHEBI:58210"/>
        <dbReference type="ChEBI" id="CHEBI:142771"/>
        <dbReference type="ChEBI" id="CHEBI:144373"/>
    </reaction>
    <physiologicalReaction direction="left-to-right" evidence="6">
        <dbReference type="Rhea" id="RHEA:61053"/>
    </physiologicalReaction>
</comment>
<comment type="cofactor">
    <cofactor evidence="1">
        <name>heme</name>
        <dbReference type="ChEBI" id="CHEBI:30413"/>
    </cofactor>
</comment>
<comment type="biophysicochemical properties">
    <kinetics>
        <KM evidence="4">300 nM for tabersonine (at pH 7 and 30 degrees Celsius)</KM>
        <Vmax evidence="4">5.0 umol/min/ug enzyme with tabersonine as substrate (at pH 7 and 30 degrees Celsius)</Vmax>
    </kinetics>
</comment>
<comment type="pathway">
    <text evidence="4 6">Alkaloid biosynthesis.</text>
</comment>
<comment type="subcellular location">
    <subcellularLocation>
        <location evidence="5">Endoplasmic reticulum membrane</location>
        <topology evidence="2">Single-pass membrane protein</topology>
    </subcellularLocation>
</comment>
<comment type="tissue specificity">
    <text evidence="5">Confined to roots.</text>
</comment>
<comment type="similarity">
    <text evidence="9">Belongs to the cytochrome P450 family.</text>
</comment>
<feature type="chain" id="PRO_0000448557" description="Tabersonine/lochnericine 19-hydroxylase">
    <location>
        <begin position="1"/>
        <end position="507"/>
    </location>
</feature>
<feature type="transmembrane region" description="Helical" evidence="2">
    <location>
        <begin position="8"/>
        <end position="28"/>
    </location>
</feature>
<feature type="binding site" description="axial binding residue" evidence="1">
    <location>
        <position position="447"/>
    </location>
    <ligand>
        <name>heme</name>
        <dbReference type="ChEBI" id="CHEBI:30413"/>
    </ligand>
    <ligandPart>
        <name>Fe</name>
        <dbReference type="ChEBI" id="CHEBI:18248"/>
    </ligandPart>
</feature>
<feature type="glycosylation site" description="N-linked (GlcNAc...) asparagine" evidence="3">
    <location>
        <position position="167"/>
    </location>
</feature>
<gene>
    <name evidence="8" type="primary">T19H</name>
    <name evidence="7 8" type="synonym">CYP71BJ1</name>
</gene>
<reference key="1">
    <citation type="journal article" date="2011" name="J. Biol. Chem.">
        <title>A stereoselective hydroxylation step of alkaloid biosynthesis by a unique cytochrome P450 in Catharanthus roseus.</title>
        <authorList>
            <person name="Giddings L.-A."/>
            <person name="Liscombe D.K."/>
            <person name="Hamilton J.P."/>
            <person name="Childs K.L."/>
            <person name="Dellapenna D."/>
            <person name="Buell C.R."/>
            <person name="O'Connor S.E."/>
        </authorList>
    </citation>
    <scope>NUCLEOTIDE SEQUENCE [MRNA]</scope>
    <scope>FUNCTION</scope>
    <scope>CATALYTIC ACTIVITY</scope>
    <scope>PATHWAY</scope>
    <scope>BIOPHYSICOCHEMICAL PROPERTIES</scope>
</reference>
<reference key="2">
    <citation type="journal article" date="2018" name="Plant J.">
        <title>A BAHD acyltransferase catalyzing 19-O-acetylation of tabersonine derivatives in roots of Catharanthus roseus enables combinatorial synthesis of monoterpene indole alkaloids.</title>
        <authorList>
            <person name="Carqueijeiro I."/>
            <person name="Duge de Bernonville T."/>
            <person name="Lanoue A."/>
            <person name="Dang T.-T."/>
            <person name="Teijaro C.N."/>
            <person name="Paetz C."/>
            <person name="Billet K."/>
            <person name="Mosquera A."/>
            <person name="Oudin A."/>
            <person name="Besseau S."/>
            <person name="Papon N."/>
            <person name="Glevarec G."/>
            <person name="Atehortua L."/>
            <person name="Clastre M."/>
            <person name="Giglioli-Guivarc'h N."/>
            <person name="Schneider B."/>
            <person name="St-Pierre B."/>
            <person name="Andrade R.B."/>
            <person name="O'Connor S.E."/>
            <person name="Courdavault V."/>
        </authorList>
    </citation>
    <scope>SUBCELLULAR LOCATION</scope>
    <scope>TISSUE SPECIFICITY</scope>
</reference>
<reference key="3">
    <citation type="journal article" date="2019" name="Plant J.">
        <title>The assembly of (+)-vincadifformine- and (-)-tabersonine-derived monoterpenoid indole alkaloids in Catharanthus roseus involves separate branch pathways.</title>
        <authorList>
            <person name="Williams D."/>
            <person name="Qu Y."/>
            <person name="Simionescu R."/>
            <person name="De Luca V."/>
        </authorList>
    </citation>
    <scope>FUNCTION</scope>
    <scope>CATALYTIC ACTIVITY</scope>
    <scope>PATHWAY</scope>
</reference>
<name>T19H_CATRO</name>
<proteinExistence type="evidence at protein level"/>
<organism>
    <name type="scientific">Catharanthus roseus</name>
    <name type="common">Madagascar periwinkle</name>
    <name type="synonym">Vinca rosea</name>
    <dbReference type="NCBI Taxonomy" id="4058"/>
    <lineage>
        <taxon>Eukaryota</taxon>
        <taxon>Viridiplantae</taxon>
        <taxon>Streptophyta</taxon>
        <taxon>Embryophyta</taxon>
        <taxon>Tracheophyta</taxon>
        <taxon>Spermatophyta</taxon>
        <taxon>Magnoliopsida</taxon>
        <taxon>eudicotyledons</taxon>
        <taxon>Gunneridae</taxon>
        <taxon>Pentapetalae</taxon>
        <taxon>asterids</taxon>
        <taxon>lamiids</taxon>
        <taxon>Gentianales</taxon>
        <taxon>Apocynaceae</taxon>
        <taxon>Rauvolfioideae</taxon>
        <taxon>Vinceae</taxon>
        <taxon>Catharanthinae</taxon>
        <taxon>Catharanthus</taxon>
    </lineage>
</organism>
<evidence type="ECO:0000250" key="1">
    <source>
        <dbReference type="UniProtKB" id="Q96242"/>
    </source>
</evidence>
<evidence type="ECO:0000255" key="2"/>
<evidence type="ECO:0000255" key="3">
    <source>
        <dbReference type="PROSITE-ProRule" id="PRU00498"/>
    </source>
</evidence>
<evidence type="ECO:0000269" key="4">
    <source>
    </source>
</evidence>
<evidence type="ECO:0000269" key="5">
    <source>
    </source>
</evidence>
<evidence type="ECO:0000269" key="6">
    <source>
    </source>
</evidence>
<evidence type="ECO:0000303" key="7">
    <source>
    </source>
</evidence>
<evidence type="ECO:0000303" key="8">
    <source>
    </source>
</evidence>
<evidence type="ECO:0000305" key="9"/>
<dbReference type="EC" id="1.14.14.-" evidence="4 6"/>
<dbReference type="EMBL" id="HQ901597">
    <property type="protein sequence ID" value="ADZ48681.1"/>
    <property type="molecule type" value="mRNA"/>
</dbReference>
<dbReference type="SMR" id="F5BHA2"/>
<dbReference type="GlyCosmos" id="F5BHA2">
    <property type="glycosylation" value="1 site, No reported glycans"/>
</dbReference>
<dbReference type="KEGG" id="ag:ADZ48681"/>
<dbReference type="GO" id="GO:0005789">
    <property type="term" value="C:endoplasmic reticulum membrane"/>
    <property type="evidence" value="ECO:0000314"/>
    <property type="project" value="UniProtKB"/>
</dbReference>
<dbReference type="GO" id="GO:0020037">
    <property type="term" value="F:heme binding"/>
    <property type="evidence" value="ECO:0007669"/>
    <property type="project" value="InterPro"/>
</dbReference>
<dbReference type="GO" id="GO:0005506">
    <property type="term" value="F:iron ion binding"/>
    <property type="evidence" value="ECO:0007669"/>
    <property type="project" value="InterPro"/>
</dbReference>
<dbReference type="GO" id="GO:0016829">
    <property type="term" value="F:lyase activity"/>
    <property type="evidence" value="ECO:0007669"/>
    <property type="project" value="UniProtKB-KW"/>
</dbReference>
<dbReference type="GO" id="GO:0004497">
    <property type="term" value="F:monooxygenase activity"/>
    <property type="evidence" value="ECO:0000314"/>
    <property type="project" value="UniProtKB"/>
</dbReference>
<dbReference type="GO" id="GO:0016705">
    <property type="term" value="F:oxidoreductase activity, acting on paired donors, with incorporation or reduction of molecular oxygen"/>
    <property type="evidence" value="ECO:0007669"/>
    <property type="project" value="InterPro"/>
</dbReference>
<dbReference type="GO" id="GO:0035835">
    <property type="term" value="P:indole alkaloid biosynthetic process"/>
    <property type="evidence" value="ECO:0000314"/>
    <property type="project" value="UniProtKB"/>
</dbReference>
<dbReference type="CDD" id="cd11072">
    <property type="entry name" value="CYP71-like"/>
    <property type="match status" value="1"/>
</dbReference>
<dbReference type="FunFam" id="1.10.630.10:FF:000011">
    <property type="entry name" value="Cytochrome P450 83B1"/>
    <property type="match status" value="1"/>
</dbReference>
<dbReference type="Gene3D" id="1.10.630.10">
    <property type="entry name" value="Cytochrome P450"/>
    <property type="match status" value="1"/>
</dbReference>
<dbReference type="InterPro" id="IPR001128">
    <property type="entry name" value="Cyt_P450"/>
</dbReference>
<dbReference type="InterPro" id="IPR017972">
    <property type="entry name" value="Cyt_P450_CS"/>
</dbReference>
<dbReference type="InterPro" id="IPR002401">
    <property type="entry name" value="Cyt_P450_E_grp-I"/>
</dbReference>
<dbReference type="InterPro" id="IPR036396">
    <property type="entry name" value="Cyt_P450_sf"/>
</dbReference>
<dbReference type="PANTHER" id="PTHR47955:SF15">
    <property type="entry name" value="CYTOCHROME P450 71A2-LIKE"/>
    <property type="match status" value="1"/>
</dbReference>
<dbReference type="PANTHER" id="PTHR47955">
    <property type="entry name" value="CYTOCHROME P450 FAMILY 71 PROTEIN"/>
    <property type="match status" value="1"/>
</dbReference>
<dbReference type="Pfam" id="PF00067">
    <property type="entry name" value="p450"/>
    <property type="match status" value="1"/>
</dbReference>
<dbReference type="PRINTS" id="PR00463">
    <property type="entry name" value="EP450I"/>
</dbReference>
<dbReference type="PRINTS" id="PR00385">
    <property type="entry name" value="P450"/>
</dbReference>
<dbReference type="SUPFAM" id="SSF48264">
    <property type="entry name" value="Cytochrome P450"/>
    <property type="match status" value="1"/>
</dbReference>
<dbReference type="PROSITE" id="PS00086">
    <property type="entry name" value="CYTOCHROME_P450"/>
    <property type="match status" value="1"/>
</dbReference>